<organism>
    <name type="scientific">Aspergillus calidoustus</name>
    <dbReference type="NCBI Taxonomy" id="454130"/>
    <lineage>
        <taxon>Eukaryota</taxon>
        <taxon>Fungi</taxon>
        <taxon>Dikarya</taxon>
        <taxon>Ascomycota</taxon>
        <taxon>Pezizomycotina</taxon>
        <taxon>Eurotiomycetes</taxon>
        <taxon>Eurotiomycetidae</taxon>
        <taxon>Eurotiales</taxon>
        <taxon>Aspergillaceae</taxon>
        <taxon>Aspergillus</taxon>
        <taxon>Aspergillus subgen. Nidulantes</taxon>
    </lineage>
</organism>
<keyword id="KW-0223">Dioxygenase</keyword>
<keyword id="KW-0408">Iron</keyword>
<keyword id="KW-0479">Metal-binding</keyword>
<keyword id="KW-0560">Oxidoreductase</keyword>
<keyword id="KW-1185">Reference proteome</keyword>
<name>AUSU_ASPCI</name>
<evidence type="ECO:0000250" key="1">
    <source>
        <dbReference type="UniProtKB" id="Q4WAW9"/>
    </source>
</evidence>
<evidence type="ECO:0000250" key="2">
    <source>
        <dbReference type="UniProtKB" id="Q5AR53"/>
    </source>
</evidence>
<evidence type="ECO:0000250" key="3">
    <source>
        <dbReference type="UniProtKB" id="Q5ATJ7"/>
    </source>
</evidence>
<evidence type="ECO:0000269" key="4">
    <source>
    </source>
</evidence>
<evidence type="ECO:0000269" key="5">
    <source>
    </source>
</evidence>
<evidence type="ECO:0000303" key="6">
    <source>
    </source>
</evidence>
<evidence type="ECO:0000305" key="7"/>
<evidence type="ECO:0000305" key="8">
    <source>
    </source>
</evidence>
<evidence type="ECO:0000305" key="9">
    <source>
    </source>
</evidence>
<comment type="function">
    <text evidence="3 4 5">Iron/alpha-ketoglutarate-dependent dioxygenase; part of the gene cluster that mediates the biosynthesis of calidodehydroaustin, a fungal meroterpenoid (PubMed:28233494, PubMed:29076725). The first step of the pathway is the synthesis of 3,5-dimethylorsellinic acid by the polyketide synthase ausA (PubMed:28233494). 3,5-dimethylorsellinic acid is then prenylated by the polyprenyl transferase ausN (PubMed:28233494). Further epoxidation by the FAD-dependent monooxygenase ausM and cyclization by the probable terpene cyclase ausL lead to the formation of protoaustinoid A (By similarity). Protoaustinoid A is then oxidized to spiro-lactone preaustinoid A3 by the combined action of the FAD-binding monooxygenases ausB and ausC, and the dioxygenase ausE (By similarity). Acid-catalyzed keto-rearrangement and ring contraction of the tetraketide portion of preaustinoid A3 by ausJ lead to the formation of preaustinoid A4 (By similarity). The aldo-keto reductase ausK, with the help of ausH, is involved in the next step by transforming preaustinoid A4 into isoaustinone which is in turn hydroxylated by the P450 monooxygenase ausI to form austinolide (By similarity). The cytochrome P450 monooxygenase ausG modifies austinolide to austinol (By similarity). Austinol is further acetylated to austin by the O-acetyltransferase ausP, which spontaneously changes to dehydroaustin (PubMed:28233494). The cytochrome P450 monooxygenase ausR then converts dehydroaustin is into 7-dehydrodehydroaustin (PubMed:28233494). The hydroxylation catalyzed by ausR permits the O-acetyltransferase ausQ to add an additional acetyl group to the molecule, leading to the formation of acetoxydehydroaustin (PubMed:28233494). The short chain dehydrogenase ausT catalyzes the reduction of the double bond present between carbon atoms 1 and 2 to convert 7-dehydrodehydroaustin into 1,2-dihydro-7-hydroxydehydroaustin (PubMed:28233494). AusQ catalyzes not only an acetylation reaction but also the addition of the PKS ausV diketide product to 1,2-dihydro-7-hydroxydehydroaustin, forming precalidodehydroaustin (PubMed:28233494). Finally, the iron/alpha-ketoglutarate-dependent dioxygenase converts precalidodehydroaustin into calidodehydroaustin (PubMed:28233494).</text>
</comment>
<comment type="cofactor">
    <cofactor evidence="2">
        <name>Fe cation</name>
        <dbReference type="ChEBI" id="CHEBI:24875"/>
    </cofactor>
</comment>
<comment type="pathway">
    <text evidence="8">Secondary metabolite biosynthesis; terpenoid biosynthesis.</text>
</comment>
<comment type="subunit">
    <text evidence="1">Homodimer.</text>
</comment>
<comment type="miscellaneous">
    <text evidence="9">In A.calidoustus, the austinoid gene cluster lies on a contiguous DNA region, while clusters from E.nidulans and P.brasilianum are split in their respective genomes. Genetic rearrangements provoked variability among the clusters and E.nidulans produces the least number of austionoid derivatives with the end products austinol and dehydroaustinol, while P.brasilianum can produce until acetoxydehydroaustin, and A.calidoustus produces the highest number of identified derivatives.</text>
</comment>
<comment type="similarity">
    <text evidence="7">Belongs to the PhyH family.</text>
</comment>
<feature type="chain" id="PRO_0000453864" description="Iron/alpha-ketoglutarate-dependent dioxygenase ausU">
    <location>
        <begin position="1"/>
        <end position="297"/>
    </location>
</feature>
<feature type="binding site" evidence="2">
    <location>
        <position position="130"/>
    </location>
    <ligand>
        <name>Fe cation</name>
        <dbReference type="ChEBI" id="CHEBI:24875"/>
    </ligand>
</feature>
<feature type="binding site" evidence="2">
    <location>
        <position position="132"/>
    </location>
    <ligand>
        <name>Fe cation</name>
        <dbReference type="ChEBI" id="CHEBI:24875"/>
    </ligand>
</feature>
<feature type="binding site" evidence="2">
    <location>
        <position position="206"/>
    </location>
    <ligand>
        <name>Fe cation</name>
        <dbReference type="ChEBI" id="CHEBI:24875"/>
    </ligand>
</feature>
<accession>A0A0U5GJ41</accession>
<sequence>MTILDKRQIQRFASDTDIETLSKAIDDDGVAIVRSVVSRDVIQRLQKEVESSDQPVWLEDNPSLKDSKFPSQARHANNLVPASKTYRDDILNNSAVHTTCKAVFRDVGDYWLTTGILRTTKPGSPAQGFHRDALLYPVLQYQPPTSPPLTVALLVSMTDATVANGATRVILGSHKWETVGTPSEDQAVRAELDAGDMLVIHQRLVHAGGEHTHQAPDTRRMLLMFLTSCQLVALESPLALSRELVETMTPLAQKMVGWRTVRPVEPNTVGLNTHRSGCLEDGLKLRAAKPLEGQDGH</sequence>
<protein>
    <recommendedName>
        <fullName evidence="6">Iron/alpha-ketoglutarate-dependent dioxygenase ausU</fullName>
        <ecNumber evidence="8">1.14.-.-</ecNumber>
    </recommendedName>
    <alternativeName>
        <fullName evidence="6">Austinoid biosynthesis cluster protein U</fullName>
    </alternativeName>
</protein>
<gene>
    <name evidence="6" type="primary">ausU</name>
    <name type="ORF">ASPCAL14364</name>
</gene>
<proteinExistence type="inferred from homology"/>
<dbReference type="EC" id="1.14.-.-" evidence="8"/>
<dbReference type="EMBL" id="CDMC01000024">
    <property type="protein sequence ID" value="CEL11261.1"/>
    <property type="molecule type" value="Genomic_DNA"/>
</dbReference>
<dbReference type="SMR" id="A0A0U5GJ41"/>
<dbReference type="STRING" id="454130.A0A0U5GJ41"/>
<dbReference type="OMA" id="ADKYPPH"/>
<dbReference type="OrthoDB" id="445007at2759"/>
<dbReference type="UniPathway" id="UPA00213"/>
<dbReference type="Proteomes" id="UP000054771">
    <property type="component" value="Unassembled WGS sequence"/>
</dbReference>
<dbReference type="GO" id="GO:0051213">
    <property type="term" value="F:dioxygenase activity"/>
    <property type="evidence" value="ECO:0007669"/>
    <property type="project" value="UniProtKB-KW"/>
</dbReference>
<dbReference type="GO" id="GO:0046872">
    <property type="term" value="F:metal ion binding"/>
    <property type="evidence" value="ECO:0007669"/>
    <property type="project" value="UniProtKB-KW"/>
</dbReference>
<dbReference type="GO" id="GO:0016114">
    <property type="term" value="P:terpenoid biosynthetic process"/>
    <property type="evidence" value="ECO:0007669"/>
    <property type="project" value="UniProtKB-UniPathway"/>
</dbReference>
<dbReference type="Gene3D" id="2.60.120.620">
    <property type="entry name" value="q2cbj1_9rhob like domain"/>
    <property type="match status" value="1"/>
</dbReference>
<dbReference type="InterPro" id="IPR008775">
    <property type="entry name" value="Phytyl_CoA_dOase-like"/>
</dbReference>
<dbReference type="PANTHER" id="PTHR20883:SF41">
    <property type="entry name" value="IRON_ALPHA-KETOGLUTARATE-DEPENDENT DIOXYGENASE ASQJ"/>
    <property type="match status" value="1"/>
</dbReference>
<dbReference type="PANTHER" id="PTHR20883">
    <property type="entry name" value="PHYTANOYL-COA DIOXYGENASE DOMAIN CONTAINING 1"/>
    <property type="match status" value="1"/>
</dbReference>
<dbReference type="Pfam" id="PF05721">
    <property type="entry name" value="PhyH"/>
    <property type="match status" value="1"/>
</dbReference>
<dbReference type="SUPFAM" id="SSF51197">
    <property type="entry name" value="Clavaminate synthase-like"/>
    <property type="match status" value="1"/>
</dbReference>
<reference key="1">
    <citation type="journal article" date="2016" name="Genome Announc.">
        <title>Draft genome sequences of fungus Aspergillus calidoustus.</title>
        <authorList>
            <person name="Horn F."/>
            <person name="Linde J."/>
            <person name="Mattern D.J."/>
            <person name="Walther G."/>
            <person name="Guthke R."/>
            <person name="Scherlach K."/>
            <person name="Martin K."/>
            <person name="Brakhage A.A."/>
            <person name="Petzke L."/>
            <person name="Valiante V."/>
        </authorList>
    </citation>
    <scope>NUCLEOTIDE SEQUENCE [LARGE SCALE GENOMIC DNA]</scope>
    <source>
        <strain>SF006504</strain>
    </source>
</reference>
<reference key="2">
    <citation type="journal article" date="2017" name="ACS Chem. Biol.">
        <title>Discovery of an Extended Austinoid Biosynthetic Pathway in Aspergillus calidoustus.</title>
        <authorList>
            <person name="Valiante V."/>
            <person name="Mattern D.J."/>
            <person name="Schueffler A."/>
            <person name="Horn F."/>
            <person name="Walther G."/>
            <person name="Scherlach K."/>
            <person name="Petzke L."/>
            <person name="Dickhaut J."/>
            <person name="Guthke R."/>
            <person name="Hertweck C."/>
            <person name="Nett M."/>
            <person name="Thines E."/>
            <person name="Brakhage A.A."/>
        </authorList>
    </citation>
    <scope>FUNCTION</scope>
    <scope>PATHWAY</scope>
</reference>
<reference key="3">
    <citation type="journal article" date="2017" name="ACS Chem. Biol.">
        <title>Rewiring of the austinoid biosynthetic pathway in filamentous fungi.</title>
        <authorList>
            <person name="Mattern D.J."/>
            <person name="Valiante V."/>
            <person name="Horn F."/>
            <person name="Petzke L."/>
            <person name="Brakhage A.A."/>
        </authorList>
    </citation>
    <scope>FUNCTION</scope>
</reference>